<keyword id="KW-0066">ATP synthesis</keyword>
<keyword id="KW-0997">Cell inner membrane</keyword>
<keyword id="KW-1003">Cell membrane</keyword>
<keyword id="KW-0138">CF(0)</keyword>
<keyword id="KW-0375">Hydrogen ion transport</keyword>
<keyword id="KW-0406">Ion transport</keyword>
<keyword id="KW-0472">Membrane</keyword>
<keyword id="KW-0812">Transmembrane</keyword>
<keyword id="KW-1133">Transmembrane helix</keyword>
<keyword id="KW-0813">Transport</keyword>
<sequence length="226" mass="25013">MKDLFLFSSLLDASHTFSYFFHIGLVALIAVIVAMMATRSMQLVPRGMQNLGEAFLEGVLSMGRDTMGSEKGARKYLPLVATLGIIVFFSNIIGIIPGFHAPTASLNLTLSLAIIVFVYYHFEGIRAQGFVKYFAHFMGPIKLLAPLMFPIEIVSHLSRVVSLSFRLFGNIKGDDLFLMVILALVPYIAPLPAYVLLTFMAFLQAFIFMILTYVYLAGATVVEEGH</sequence>
<gene>
    <name evidence="1" type="primary">atpB</name>
    <name type="ordered locus">C8J_1147</name>
</gene>
<protein>
    <recommendedName>
        <fullName evidence="1">ATP synthase subunit a</fullName>
    </recommendedName>
    <alternativeName>
        <fullName evidence="1">ATP synthase F0 sector subunit a</fullName>
    </alternativeName>
    <alternativeName>
        <fullName evidence="1">F-ATPase subunit 6</fullName>
    </alternativeName>
</protein>
<comment type="function">
    <text evidence="1">Key component of the proton channel; it plays a direct role in the translocation of protons across the membrane.</text>
</comment>
<comment type="subunit">
    <text evidence="1">F-type ATPases have 2 components, CF(1) - the catalytic core - and CF(0) - the membrane proton channel. CF(1) has five subunits: alpha(3), beta(3), gamma(1), delta(1), epsilon(1). CF(0) has three main subunits: a(1), b(2) and c(9-12). The alpha and beta chains form an alternating ring which encloses part of the gamma chain. CF(1) is attached to CF(0) by a central stalk formed by the gamma and epsilon chains, while a peripheral stalk is formed by the delta and b chains.</text>
</comment>
<comment type="subcellular location">
    <subcellularLocation>
        <location evidence="1">Cell inner membrane</location>
        <topology evidence="1">Multi-pass membrane protein</topology>
    </subcellularLocation>
</comment>
<comment type="similarity">
    <text evidence="1">Belongs to the ATPase A chain family.</text>
</comment>
<reference key="1">
    <citation type="journal article" date="2007" name="J. Bacteriol.">
        <title>The complete genome sequence of Campylobacter jejuni strain 81116 (NCTC11828).</title>
        <authorList>
            <person name="Pearson B.M."/>
            <person name="Gaskin D.J.H."/>
            <person name="Segers R.P.A.M."/>
            <person name="Wells J.M."/>
            <person name="Nuijten P.J.M."/>
            <person name="van Vliet A.H.M."/>
        </authorList>
    </citation>
    <scope>NUCLEOTIDE SEQUENCE [LARGE SCALE GENOMIC DNA]</scope>
    <source>
        <strain>81116 / NCTC 11828</strain>
    </source>
</reference>
<proteinExistence type="inferred from homology"/>
<organism>
    <name type="scientific">Campylobacter jejuni subsp. jejuni serotype O:6 (strain 81116 / NCTC 11828)</name>
    <dbReference type="NCBI Taxonomy" id="407148"/>
    <lineage>
        <taxon>Bacteria</taxon>
        <taxon>Pseudomonadati</taxon>
        <taxon>Campylobacterota</taxon>
        <taxon>Epsilonproteobacteria</taxon>
        <taxon>Campylobacterales</taxon>
        <taxon>Campylobacteraceae</taxon>
        <taxon>Campylobacter</taxon>
    </lineage>
</organism>
<dbReference type="EMBL" id="CP000814">
    <property type="protein sequence ID" value="ABV52746.1"/>
    <property type="molecule type" value="Genomic_DNA"/>
</dbReference>
<dbReference type="RefSeq" id="WP_002858390.1">
    <property type="nucleotide sequence ID" value="NC_009839.1"/>
</dbReference>
<dbReference type="SMR" id="A8FMQ9"/>
<dbReference type="KEGG" id="cju:C8J_1147"/>
<dbReference type="HOGENOM" id="CLU_041018_2_2_7"/>
<dbReference type="GO" id="GO:0005886">
    <property type="term" value="C:plasma membrane"/>
    <property type="evidence" value="ECO:0007669"/>
    <property type="project" value="UniProtKB-SubCell"/>
</dbReference>
<dbReference type="GO" id="GO:0045259">
    <property type="term" value="C:proton-transporting ATP synthase complex"/>
    <property type="evidence" value="ECO:0007669"/>
    <property type="project" value="UniProtKB-KW"/>
</dbReference>
<dbReference type="GO" id="GO:0046933">
    <property type="term" value="F:proton-transporting ATP synthase activity, rotational mechanism"/>
    <property type="evidence" value="ECO:0007669"/>
    <property type="project" value="UniProtKB-UniRule"/>
</dbReference>
<dbReference type="GO" id="GO:0042777">
    <property type="term" value="P:proton motive force-driven plasma membrane ATP synthesis"/>
    <property type="evidence" value="ECO:0007669"/>
    <property type="project" value="TreeGrafter"/>
</dbReference>
<dbReference type="CDD" id="cd00310">
    <property type="entry name" value="ATP-synt_Fo_a_6"/>
    <property type="match status" value="1"/>
</dbReference>
<dbReference type="FunFam" id="1.20.120.220:FF:000006">
    <property type="entry name" value="ATP synthase subunit a"/>
    <property type="match status" value="1"/>
</dbReference>
<dbReference type="Gene3D" id="1.20.120.220">
    <property type="entry name" value="ATP synthase, F0 complex, subunit A"/>
    <property type="match status" value="1"/>
</dbReference>
<dbReference type="HAMAP" id="MF_01393">
    <property type="entry name" value="ATP_synth_a_bact"/>
    <property type="match status" value="1"/>
</dbReference>
<dbReference type="InterPro" id="IPR045082">
    <property type="entry name" value="ATP_syn_F0_a_bact/chloroplast"/>
</dbReference>
<dbReference type="InterPro" id="IPR000568">
    <property type="entry name" value="ATP_synth_F0_asu"/>
</dbReference>
<dbReference type="InterPro" id="IPR023011">
    <property type="entry name" value="ATP_synth_F0_asu_AS"/>
</dbReference>
<dbReference type="InterPro" id="IPR035908">
    <property type="entry name" value="F0_ATP_A_sf"/>
</dbReference>
<dbReference type="NCBIfam" id="TIGR01131">
    <property type="entry name" value="ATP_synt_6_or_A"/>
    <property type="match status" value="1"/>
</dbReference>
<dbReference type="NCBIfam" id="NF004481">
    <property type="entry name" value="PRK05815.2-3"/>
    <property type="match status" value="1"/>
</dbReference>
<dbReference type="PANTHER" id="PTHR42823">
    <property type="entry name" value="ATP SYNTHASE SUBUNIT A, CHLOROPLASTIC"/>
    <property type="match status" value="1"/>
</dbReference>
<dbReference type="PANTHER" id="PTHR42823:SF3">
    <property type="entry name" value="ATP SYNTHASE SUBUNIT A, CHLOROPLASTIC"/>
    <property type="match status" value="1"/>
</dbReference>
<dbReference type="Pfam" id="PF00119">
    <property type="entry name" value="ATP-synt_A"/>
    <property type="match status" value="1"/>
</dbReference>
<dbReference type="PRINTS" id="PR00123">
    <property type="entry name" value="ATPASEA"/>
</dbReference>
<dbReference type="SUPFAM" id="SSF81336">
    <property type="entry name" value="F1F0 ATP synthase subunit A"/>
    <property type="match status" value="1"/>
</dbReference>
<dbReference type="PROSITE" id="PS00449">
    <property type="entry name" value="ATPASE_A"/>
    <property type="match status" value="1"/>
</dbReference>
<name>ATP6_CAMJ8</name>
<feature type="chain" id="PRO_0000362268" description="ATP synthase subunit a">
    <location>
        <begin position="1"/>
        <end position="226"/>
    </location>
</feature>
<feature type="transmembrane region" description="Helical" evidence="1">
    <location>
        <begin position="17"/>
        <end position="37"/>
    </location>
</feature>
<feature type="transmembrane region" description="Helical" evidence="1">
    <location>
        <begin position="79"/>
        <end position="99"/>
    </location>
</feature>
<feature type="transmembrane region" description="Helical" evidence="1">
    <location>
        <begin position="105"/>
        <end position="125"/>
    </location>
</feature>
<feature type="transmembrane region" description="Helical" evidence="1">
    <location>
        <begin position="134"/>
        <end position="154"/>
    </location>
</feature>
<feature type="transmembrane region" description="Helical" evidence="1">
    <location>
        <begin position="176"/>
        <end position="196"/>
    </location>
</feature>
<feature type="transmembrane region" description="Helical" evidence="1">
    <location>
        <begin position="199"/>
        <end position="219"/>
    </location>
</feature>
<accession>A8FMQ9</accession>
<evidence type="ECO:0000255" key="1">
    <source>
        <dbReference type="HAMAP-Rule" id="MF_01393"/>
    </source>
</evidence>